<comment type="similarity">
    <text evidence="1">Belongs to the universal ribosomal protein uS2 family.</text>
</comment>
<dbReference type="EMBL" id="AP010656">
    <property type="protein sequence ID" value="BAG83549.1"/>
    <property type="molecule type" value="Genomic_DNA"/>
</dbReference>
<dbReference type="RefSeq" id="WP_012573310.1">
    <property type="nucleotide sequence ID" value="NC_011565.1"/>
</dbReference>
<dbReference type="SMR" id="B6YQS7"/>
<dbReference type="STRING" id="511995.CFPG_286"/>
<dbReference type="KEGG" id="aps:CFPG_286"/>
<dbReference type="eggNOG" id="COG0052">
    <property type="taxonomic scope" value="Bacteria"/>
</dbReference>
<dbReference type="HOGENOM" id="CLU_040318_1_2_10"/>
<dbReference type="OrthoDB" id="9808036at2"/>
<dbReference type="Proteomes" id="UP000000723">
    <property type="component" value="Chromosome"/>
</dbReference>
<dbReference type="GO" id="GO:0022627">
    <property type="term" value="C:cytosolic small ribosomal subunit"/>
    <property type="evidence" value="ECO:0007669"/>
    <property type="project" value="TreeGrafter"/>
</dbReference>
<dbReference type="GO" id="GO:0003735">
    <property type="term" value="F:structural constituent of ribosome"/>
    <property type="evidence" value="ECO:0007669"/>
    <property type="project" value="InterPro"/>
</dbReference>
<dbReference type="GO" id="GO:0006412">
    <property type="term" value="P:translation"/>
    <property type="evidence" value="ECO:0007669"/>
    <property type="project" value="UniProtKB-UniRule"/>
</dbReference>
<dbReference type="CDD" id="cd01425">
    <property type="entry name" value="RPS2"/>
    <property type="match status" value="1"/>
</dbReference>
<dbReference type="FunFam" id="1.10.287.610:FF:000001">
    <property type="entry name" value="30S ribosomal protein S2"/>
    <property type="match status" value="1"/>
</dbReference>
<dbReference type="Gene3D" id="3.40.50.10490">
    <property type="entry name" value="Glucose-6-phosphate isomerase like protein, domain 1"/>
    <property type="match status" value="1"/>
</dbReference>
<dbReference type="Gene3D" id="1.10.287.610">
    <property type="entry name" value="Helix hairpin bin"/>
    <property type="match status" value="1"/>
</dbReference>
<dbReference type="HAMAP" id="MF_00291_B">
    <property type="entry name" value="Ribosomal_uS2_B"/>
    <property type="match status" value="1"/>
</dbReference>
<dbReference type="InterPro" id="IPR001865">
    <property type="entry name" value="Ribosomal_uS2"/>
</dbReference>
<dbReference type="InterPro" id="IPR005706">
    <property type="entry name" value="Ribosomal_uS2_bac/mit/plastid"/>
</dbReference>
<dbReference type="InterPro" id="IPR018130">
    <property type="entry name" value="Ribosomal_uS2_CS"/>
</dbReference>
<dbReference type="InterPro" id="IPR023591">
    <property type="entry name" value="Ribosomal_uS2_flav_dom_sf"/>
</dbReference>
<dbReference type="NCBIfam" id="TIGR01011">
    <property type="entry name" value="rpsB_bact"/>
    <property type="match status" value="1"/>
</dbReference>
<dbReference type="PANTHER" id="PTHR12534">
    <property type="entry name" value="30S RIBOSOMAL PROTEIN S2 PROKARYOTIC AND ORGANELLAR"/>
    <property type="match status" value="1"/>
</dbReference>
<dbReference type="PANTHER" id="PTHR12534:SF0">
    <property type="entry name" value="SMALL RIBOSOMAL SUBUNIT PROTEIN US2M"/>
    <property type="match status" value="1"/>
</dbReference>
<dbReference type="Pfam" id="PF00318">
    <property type="entry name" value="Ribosomal_S2"/>
    <property type="match status" value="1"/>
</dbReference>
<dbReference type="PRINTS" id="PR00395">
    <property type="entry name" value="RIBOSOMALS2"/>
</dbReference>
<dbReference type="SUPFAM" id="SSF52313">
    <property type="entry name" value="Ribosomal protein S2"/>
    <property type="match status" value="1"/>
</dbReference>
<dbReference type="PROSITE" id="PS00962">
    <property type="entry name" value="RIBOSOMAL_S2_1"/>
    <property type="match status" value="1"/>
</dbReference>
<name>RS2_AZOPC</name>
<evidence type="ECO:0000255" key="1">
    <source>
        <dbReference type="HAMAP-Rule" id="MF_00291"/>
    </source>
</evidence>
<evidence type="ECO:0000305" key="2"/>
<accession>B6YQS7</accession>
<feature type="chain" id="PRO_1000114990" description="Small ribosomal subunit protein uS2">
    <location>
        <begin position="1"/>
        <end position="262"/>
    </location>
</feature>
<gene>
    <name evidence="1" type="primary">rpsB</name>
    <name type="ordered locus">CFPG_286</name>
</gene>
<sequence>MLRVSFEQLLEAGVHFGHLKRKWNPAMAPYIFMERKGIHIIDLHKTILKIDEASSAIKQIIRSGRKILFVATKKQAKQVVADKVSFVGMPYVTEHWAGGMLTNFPTIRKAIQKMTVIDRMAHDGTFDLLSKRERLQITRQRAKLEKNLGSIADLKRLPSALFVVDVMKERIAVSEAKRLDIPVFAIVDTNSNPNGIDFIIPANDDATSSIEVILNAICDAIIEGKEERMMDTSINNENKEKTVSVFRKRTKIEGRSKKDSLS</sequence>
<protein>
    <recommendedName>
        <fullName evidence="1">Small ribosomal subunit protein uS2</fullName>
    </recommendedName>
    <alternativeName>
        <fullName evidence="2">30S ribosomal protein S2</fullName>
    </alternativeName>
</protein>
<reference key="1">
    <citation type="journal article" date="2008" name="Science">
        <title>Genome of an endosymbiont coupling N2 fixation to cellulolysis within RT protist cells in termite gut.</title>
        <authorList>
            <person name="Hongoh Y."/>
            <person name="Sharma V.K."/>
            <person name="Prakash T."/>
            <person name="Noda S."/>
            <person name="Toh H."/>
            <person name="Taylor T.D."/>
            <person name="Kudo T."/>
            <person name="Sakaki Y."/>
            <person name="Toyoda A."/>
            <person name="Hattori M."/>
            <person name="Ohkuma M."/>
        </authorList>
    </citation>
    <scope>NUCLEOTIDE SEQUENCE [LARGE SCALE GENOMIC DNA]</scope>
</reference>
<organism>
    <name type="scientific">Azobacteroides pseudotrichonymphae genomovar. CFP2</name>
    <dbReference type="NCBI Taxonomy" id="511995"/>
    <lineage>
        <taxon>Bacteria</taxon>
        <taxon>Pseudomonadati</taxon>
        <taxon>Bacteroidota</taxon>
        <taxon>Bacteroidia</taxon>
        <taxon>Bacteroidales</taxon>
        <taxon>Candidatus Azobacteroides</taxon>
    </lineage>
</organism>
<proteinExistence type="inferred from homology"/>
<keyword id="KW-1185">Reference proteome</keyword>
<keyword id="KW-0687">Ribonucleoprotein</keyword>
<keyword id="KW-0689">Ribosomal protein</keyword>